<accession>Q75AM2</accession>
<proteinExistence type="inferred from homology"/>
<name>KAPR_EREGS</name>
<dbReference type="EMBL" id="AE016817">
    <property type="protein sequence ID" value="AAS51821.1"/>
    <property type="molecule type" value="Genomic_DNA"/>
</dbReference>
<dbReference type="RefSeq" id="NP_983997.1">
    <property type="nucleotide sequence ID" value="NM_209350.1"/>
</dbReference>
<dbReference type="SMR" id="Q75AM2"/>
<dbReference type="FunCoup" id="Q75AM2">
    <property type="interactions" value="466"/>
</dbReference>
<dbReference type="STRING" id="284811.Q75AM2"/>
<dbReference type="EnsemblFungi" id="AAS51821">
    <property type="protein sequence ID" value="AAS51821"/>
    <property type="gene ID" value="AGOS_ADL099C"/>
</dbReference>
<dbReference type="GeneID" id="4620139"/>
<dbReference type="KEGG" id="ago:AGOS_ADL099C"/>
<dbReference type="eggNOG" id="KOG1113">
    <property type="taxonomic scope" value="Eukaryota"/>
</dbReference>
<dbReference type="HOGENOM" id="CLU_018310_0_1_1"/>
<dbReference type="InParanoid" id="Q75AM2"/>
<dbReference type="OMA" id="MPYERSK"/>
<dbReference type="OrthoDB" id="417078at2759"/>
<dbReference type="Proteomes" id="UP000000591">
    <property type="component" value="Chromosome IV"/>
</dbReference>
<dbReference type="GO" id="GO:0005952">
    <property type="term" value="C:cAMP-dependent protein kinase complex"/>
    <property type="evidence" value="ECO:0000318"/>
    <property type="project" value="GO_Central"/>
</dbReference>
<dbReference type="GO" id="GO:0000785">
    <property type="term" value="C:chromatin"/>
    <property type="evidence" value="ECO:0007669"/>
    <property type="project" value="EnsemblFungi"/>
</dbReference>
<dbReference type="GO" id="GO:0005829">
    <property type="term" value="C:cytosol"/>
    <property type="evidence" value="ECO:0000318"/>
    <property type="project" value="GO_Central"/>
</dbReference>
<dbReference type="GO" id="GO:0005634">
    <property type="term" value="C:nucleus"/>
    <property type="evidence" value="ECO:0000318"/>
    <property type="project" value="GO_Central"/>
</dbReference>
<dbReference type="GO" id="GO:0005886">
    <property type="term" value="C:plasma membrane"/>
    <property type="evidence" value="ECO:0007669"/>
    <property type="project" value="EnsemblFungi"/>
</dbReference>
<dbReference type="GO" id="GO:0030552">
    <property type="term" value="F:cAMP binding"/>
    <property type="evidence" value="ECO:0000318"/>
    <property type="project" value="GO_Central"/>
</dbReference>
<dbReference type="GO" id="GO:0004862">
    <property type="term" value="F:cAMP-dependent protein kinase inhibitor activity"/>
    <property type="evidence" value="ECO:0000318"/>
    <property type="project" value="GO_Central"/>
</dbReference>
<dbReference type="GO" id="GO:0042802">
    <property type="term" value="F:identical protein binding"/>
    <property type="evidence" value="ECO:0007669"/>
    <property type="project" value="EnsemblFungi"/>
</dbReference>
<dbReference type="GO" id="GO:0034236">
    <property type="term" value="F:protein kinase A catalytic subunit binding"/>
    <property type="evidence" value="ECO:0000318"/>
    <property type="project" value="GO_Central"/>
</dbReference>
<dbReference type="GO" id="GO:0007189">
    <property type="term" value="P:adenylate cyclase-activating G protein-coupled receptor signaling pathway"/>
    <property type="evidence" value="ECO:0000318"/>
    <property type="project" value="GO_Central"/>
</dbReference>
<dbReference type="GO" id="GO:0042149">
    <property type="term" value="P:cellular response to glucose starvation"/>
    <property type="evidence" value="ECO:0007669"/>
    <property type="project" value="EnsemblFungi"/>
</dbReference>
<dbReference type="GO" id="GO:0006995">
    <property type="term" value="P:cellular response to nitrogen starvation"/>
    <property type="evidence" value="ECO:0007669"/>
    <property type="project" value="EnsemblFungi"/>
</dbReference>
<dbReference type="GO" id="GO:0046580">
    <property type="term" value="P:negative regulation of Ras protein signal transduction"/>
    <property type="evidence" value="ECO:0007669"/>
    <property type="project" value="EnsemblFungi"/>
</dbReference>
<dbReference type="GO" id="GO:0046827">
    <property type="term" value="P:positive regulation of protein export from nucleus"/>
    <property type="evidence" value="ECO:0007669"/>
    <property type="project" value="EnsemblFungi"/>
</dbReference>
<dbReference type="GO" id="GO:0045944">
    <property type="term" value="P:positive regulation of transcription by RNA polymerase II"/>
    <property type="evidence" value="ECO:0007669"/>
    <property type="project" value="EnsemblFungi"/>
</dbReference>
<dbReference type="GO" id="GO:0097271">
    <property type="term" value="P:protein localization to bud neck"/>
    <property type="evidence" value="ECO:0007669"/>
    <property type="project" value="EnsemblFungi"/>
</dbReference>
<dbReference type="GO" id="GO:0010603">
    <property type="term" value="P:regulation of cytoplasmic mRNA processing body assembly"/>
    <property type="evidence" value="ECO:0007669"/>
    <property type="project" value="EnsemblFungi"/>
</dbReference>
<dbReference type="CDD" id="cd00038">
    <property type="entry name" value="CAP_ED"/>
    <property type="match status" value="2"/>
</dbReference>
<dbReference type="CDD" id="cd12098">
    <property type="entry name" value="DD_R_ScPKA-like"/>
    <property type="match status" value="1"/>
</dbReference>
<dbReference type="FunFam" id="2.60.120.10:FF:000039">
    <property type="entry name" value="cAMP-dependent protein kinase regulatory subunit"/>
    <property type="match status" value="1"/>
</dbReference>
<dbReference type="FunFam" id="2.60.120.10:FF:000118">
    <property type="entry name" value="cAMP-dependent protein kinase regulatory subunit"/>
    <property type="match status" value="1"/>
</dbReference>
<dbReference type="Gene3D" id="1.20.890.10">
    <property type="entry name" value="cAMP-dependent protein kinase regulatory subunit, dimerization-anchoring domain"/>
    <property type="match status" value="1"/>
</dbReference>
<dbReference type="Gene3D" id="2.60.120.10">
    <property type="entry name" value="Jelly Rolls"/>
    <property type="match status" value="2"/>
</dbReference>
<dbReference type="InterPro" id="IPR050503">
    <property type="entry name" value="cAMP-dep_PK_reg_su-like"/>
</dbReference>
<dbReference type="InterPro" id="IPR012198">
    <property type="entry name" value="cAMP_dep_PK_reg_su"/>
</dbReference>
<dbReference type="InterPro" id="IPR003117">
    <property type="entry name" value="cAMP_dep_PK_reg_su_I/II_a/b"/>
</dbReference>
<dbReference type="InterPro" id="IPR018488">
    <property type="entry name" value="cNMP-bd_CS"/>
</dbReference>
<dbReference type="InterPro" id="IPR000595">
    <property type="entry name" value="cNMP-bd_dom"/>
</dbReference>
<dbReference type="InterPro" id="IPR018490">
    <property type="entry name" value="cNMP-bd_dom_sf"/>
</dbReference>
<dbReference type="InterPro" id="IPR014710">
    <property type="entry name" value="RmlC-like_jellyroll"/>
</dbReference>
<dbReference type="PANTHER" id="PTHR11635">
    <property type="entry name" value="CAMP-DEPENDENT PROTEIN KINASE REGULATORY CHAIN"/>
    <property type="match status" value="1"/>
</dbReference>
<dbReference type="PANTHER" id="PTHR11635:SF152">
    <property type="entry name" value="CAMP-DEPENDENT PROTEIN KINASE TYPE I REGULATORY SUBUNIT-RELATED"/>
    <property type="match status" value="1"/>
</dbReference>
<dbReference type="Pfam" id="PF00027">
    <property type="entry name" value="cNMP_binding"/>
    <property type="match status" value="2"/>
</dbReference>
<dbReference type="Pfam" id="PF02197">
    <property type="entry name" value="RIIa"/>
    <property type="match status" value="1"/>
</dbReference>
<dbReference type="PIRSF" id="PIRSF000548">
    <property type="entry name" value="PK_regulatory"/>
    <property type="match status" value="1"/>
</dbReference>
<dbReference type="PRINTS" id="PR00103">
    <property type="entry name" value="CAMPKINASE"/>
</dbReference>
<dbReference type="SMART" id="SM00100">
    <property type="entry name" value="cNMP"/>
    <property type="match status" value="2"/>
</dbReference>
<dbReference type="SMART" id="SM00394">
    <property type="entry name" value="RIIa"/>
    <property type="match status" value="1"/>
</dbReference>
<dbReference type="SUPFAM" id="SSF51206">
    <property type="entry name" value="cAMP-binding domain-like"/>
    <property type="match status" value="2"/>
</dbReference>
<dbReference type="SUPFAM" id="SSF47391">
    <property type="entry name" value="Dimerization-anchoring domain of cAMP-dependent PK regulatory subunit"/>
    <property type="match status" value="1"/>
</dbReference>
<dbReference type="PROSITE" id="PS00888">
    <property type="entry name" value="CNMP_BINDING_1"/>
    <property type="match status" value="2"/>
</dbReference>
<dbReference type="PROSITE" id="PS00889">
    <property type="entry name" value="CNMP_BINDING_2"/>
    <property type="match status" value="1"/>
</dbReference>
<dbReference type="PROSITE" id="PS50042">
    <property type="entry name" value="CNMP_BINDING_3"/>
    <property type="match status" value="2"/>
</dbReference>
<feature type="chain" id="PRO_0000205399" description="cAMP-dependent protein kinase regulatory subunit">
    <location>
        <begin position="1"/>
        <end position="458"/>
    </location>
</feature>
<feature type="region of interest" description="Dimerization and phosphorylation" evidence="2">
    <location>
        <begin position="28"/>
        <end position="222"/>
    </location>
</feature>
<feature type="binding site">
    <location>
        <begin position="223"/>
        <end position="338"/>
    </location>
    <ligand>
        <name>3',5'-cyclic AMP</name>
        <dbReference type="ChEBI" id="CHEBI:58165"/>
        <label>1</label>
    </ligand>
</feature>
<feature type="binding site" evidence="1">
    <location>
        <position position="288"/>
    </location>
    <ligand>
        <name>3',5'-cyclic AMP</name>
        <dbReference type="ChEBI" id="CHEBI:58165"/>
        <label>1</label>
    </ligand>
</feature>
<feature type="binding site" evidence="1">
    <location>
        <position position="297"/>
    </location>
    <ligand>
        <name>3',5'-cyclic AMP</name>
        <dbReference type="ChEBI" id="CHEBI:58165"/>
        <label>1</label>
    </ligand>
</feature>
<feature type="binding site">
    <location>
        <begin position="341"/>
        <end position="457"/>
    </location>
    <ligand>
        <name>3',5'-cyclic AMP</name>
        <dbReference type="ChEBI" id="CHEBI:58165"/>
        <label>2</label>
    </ligand>
</feature>
<feature type="binding site" evidence="1">
    <location>
        <position position="407"/>
    </location>
    <ligand>
        <name>3',5'-cyclic AMP</name>
        <dbReference type="ChEBI" id="CHEBI:58165"/>
        <label>2</label>
    </ligand>
</feature>
<feature type="binding site" evidence="1">
    <location>
        <position position="416"/>
    </location>
    <ligand>
        <name>3',5'-cyclic AMP</name>
        <dbReference type="ChEBI" id="CHEBI:58165"/>
        <label>2</label>
    </ligand>
</feature>
<feature type="modified residue" description="Phosphoserine" evidence="1">
    <location>
        <position position="184"/>
    </location>
</feature>
<gene>
    <name type="primary">PKAR</name>
    <name type="ordered locus">ADL099C</name>
</gene>
<keyword id="KW-0114">cAMP</keyword>
<keyword id="KW-0116">cAMP-binding</keyword>
<keyword id="KW-0547">Nucleotide-binding</keyword>
<keyword id="KW-0597">Phosphoprotein</keyword>
<keyword id="KW-1185">Reference proteome</keyword>
<keyword id="KW-0677">Repeat</keyword>
<organism>
    <name type="scientific">Eremothecium gossypii (strain ATCC 10895 / CBS 109.51 / FGSC 9923 / NRRL Y-1056)</name>
    <name type="common">Yeast</name>
    <name type="synonym">Ashbya gossypii</name>
    <dbReference type="NCBI Taxonomy" id="284811"/>
    <lineage>
        <taxon>Eukaryota</taxon>
        <taxon>Fungi</taxon>
        <taxon>Dikarya</taxon>
        <taxon>Ascomycota</taxon>
        <taxon>Saccharomycotina</taxon>
        <taxon>Saccharomycetes</taxon>
        <taxon>Saccharomycetales</taxon>
        <taxon>Saccharomycetaceae</taxon>
        <taxon>Eremothecium</taxon>
    </lineage>
</organism>
<comment type="subunit">
    <text evidence="1">Tetramer, composed of 2 regulatory (R) and 2 catalytic (C) subunits. In the presence of cAMP it dissociates into 2 active monomeric C subunits and an R dimer (By similarity).</text>
</comment>
<comment type="similarity">
    <text evidence="3">Belongs to the cAMP-dependent kinase regulatory chain family.</text>
</comment>
<sequence>MVLSQEHRDLLDAFQKEVEQRRPGDLLQFAANYFNKKLEEERLFVRSQESLALSKGVVLFPGSEGCGANRAAGSPDARKTGEDEDVMFKLPFVEHDPHSRHIYDDNKHGHDSCDPHTSFSREPGAGLFQGGYNMGQEAQKEAQTDFDPKASEVSSILKQRNVPRKSGVNSKPLPMNFNAERRTSVSGETLKPDHFSDWTPENYTEKTREQLKGLESAVGKNFLFNKLDSDSKTLVINSLEEKLVSKGQEIIRQGDEGDYFYIVEKGTVDFFLDDRKVNTYGPGSCFGELALMYNSPRAVTAVAATDCVLWALDRLTFRRILLSGSFKKRLLYDDFLKSMPLLKSLSNYDRAKLADALETEYYEAGQQVISEGDVGENFYLIEYGEADVSKRGVGVVQHLKKGDYFGEVALLNDLPRQATVTATTKLKVATLGKSGFQRLLGPVVEVLRLNDPTRADKR</sequence>
<protein>
    <recommendedName>
        <fullName>cAMP-dependent protein kinase regulatory subunit</fullName>
        <shortName>PKA regulatory subunit</shortName>
    </recommendedName>
</protein>
<reference key="1">
    <citation type="journal article" date="2004" name="Science">
        <title>The Ashbya gossypii genome as a tool for mapping the ancient Saccharomyces cerevisiae genome.</title>
        <authorList>
            <person name="Dietrich F.S."/>
            <person name="Voegeli S."/>
            <person name="Brachat S."/>
            <person name="Lerch A."/>
            <person name="Gates K."/>
            <person name="Steiner S."/>
            <person name="Mohr C."/>
            <person name="Poehlmann R."/>
            <person name="Luedi P."/>
            <person name="Choi S."/>
            <person name="Wing R.A."/>
            <person name="Flavier A."/>
            <person name="Gaffney T.D."/>
            <person name="Philippsen P."/>
        </authorList>
    </citation>
    <scope>NUCLEOTIDE SEQUENCE [LARGE SCALE GENOMIC DNA]</scope>
    <source>
        <strain>ATCC 10895 / CBS 109.51 / FGSC 9923 / NRRL Y-1056</strain>
    </source>
</reference>
<reference key="2">
    <citation type="journal article" date="2013" name="G3 (Bethesda)">
        <title>Genomes of Ashbya fungi isolated from insects reveal four mating-type loci, numerous translocations, lack of transposons, and distinct gene duplications.</title>
        <authorList>
            <person name="Dietrich F.S."/>
            <person name="Voegeli S."/>
            <person name="Kuo S."/>
            <person name="Philippsen P."/>
        </authorList>
    </citation>
    <scope>GENOME REANNOTATION</scope>
    <source>
        <strain>ATCC 10895 / CBS 109.51 / FGSC 9923 / NRRL Y-1056</strain>
    </source>
</reference>
<evidence type="ECO:0000250" key="1"/>
<evidence type="ECO:0000255" key="2"/>
<evidence type="ECO:0000305" key="3"/>